<reference key="1">
    <citation type="journal article" date="1997" name="Nature">
        <title>The nucleotide sequence of Saccharomyces cerevisiae chromosome XVI.</title>
        <authorList>
            <person name="Bussey H."/>
            <person name="Storms R.K."/>
            <person name="Ahmed A."/>
            <person name="Albermann K."/>
            <person name="Allen E."/>
            <person name="Ansorge W."/>
            <person name="Araujo R."/>
            <person name="Aparicio A."/>
            <person name="Barrell B.G."/>
            <person name="Badcock K."/>
            <person name="Benes V."/>
            <person name="Botstein D."/>
            <person name="Bowman S."/>
            <person name="Brueckner M."/>
            <person name="Carpenter J."/>
            <person name="Cherry J.M."/>
            <person name="Chung E."/>
            <person name="Churcher C.M."/>
            <person name="Coster F."/>
            <person name="Davis K."/>
            <person name="Davis R.W."/>
            <person name="Dietrich F.S."/>
            <person name="Delius H."/>
            <person name="DiPaolo T."/>
            <person name="Dubois E."/>
            <person name="Duesterhoeft A."/>
            <person name="Duncan M."/>
            <person name="Floeth M."/>
            <person name="Fortin N."/>
            <person name="Friesen J.D."/>
            <person name="Fritz C."/>
            <person name="Goffeau A."/>
            <person name="Hall J."/>
            <person name="Hebling U."/>
            <person name="Heumann K."/>
            <person name="Hilbert H."/>
            <person name="Hillier L.W."/>
            <person name="Hunicke-Smith S."/>
            <person name="Hyman R.W."/>
            <person name="Johnston M."/>
            <person name="Kalman S."/>
            <person name="Kleine K."/>
            <person name="Komp C."/>
            <person name="Kurdi O."/>
            <person name="Lashkari D."/>
            <person name="Lew H."/>
            <person name="Lin A."/>
            <person name="Lin D."/>
            <person name="Louis E.J."/>
            <person name="Marathe R."/>
            <person name="Messenguy F."/>
            <person name="Mewes H.-W."/>
            <person name="Mirtipati S."/>
            <person name="Moestl D."/>
            <person name="Mueller-Auer S."/>
            <person name="Namath A."/>
            <person name="Nentwich U."/>
            <person name="Oefner P."/>
            <person name="Pearson D."/>
            <person name="Petel F.X."/>
            <person name="Pohl T.M."/>
            <person name="Purnelle B."/>
            <person name="Rajandream M.A."/>
            <person name="Rechmann S."/>
            <person name="Rieger M."/>
            <person name="Riles L."/>
            <person name="Roberts D."/>
            <person name="Schaefer M."/>
            <person name="Scharfe M."/>
            <person name="Scherens B."/>
            <person name="Schramm S."/>
            <person name="Schroeder M."/>
            <person name="Sdicu A.-M."/>
            <person name="Tettelin H."/>
            <person name="Urrestarazu L.A."/>
            <person name="Ushinsky S."/>
            <person name="Vierendeels F."/>
            <person name="Vissers S."/>
            <person name="Voss H."/>
            <person name="Walsh S.V."/>
            <person name="Wambutt R."/>
            <person name="Wang Y."/>
            <person name="Wedler E."/>
            <person name="Wedler H."/>
            <person name="Winnett E."/>
            <person name="Zhong W.-W."/>
            <person name="Zollner A."/>
            <person name="Vo D.H."/>
            <person name="Hani J."/>
        </authorList>
    </citation>
    <scope>NUCLEOTIDE SEQUENCE [LARGE SCALE GENOMIC DNA]</scope>
    <source>
        <strain>ATCC 204508 / S288c</strain>
    </source>
</reference>
<reference key="2">
    <citation type="journal article" date="2014" name="G3 (Bethesda)">
        <title>The reference genome sequence of Saccharomyces cerevisiae: Then and now.</title>
        <authorList>
            <person name="Engel S.R."/>
            <person name="Dietrich F.S."/>
            <person name="Fisk D.G."/>
            <person name="Binkley G."/>
            <person name="Balakrishnan R."/>
            <person name="Costanzo M.C."/>
            <person name="Dwight S.S."/>
            <person name="Hitz B.C."/>
            <person name="Karra K."/>
            <person name="Nash R.S."/>
            <person name="Weng S."/>
            <person name="Wong E.D."/>
            <person name="Lloyd P."/>
            <person name="Skrzypek M.S."/>
            <person name="Miyasato S.R."/>
            <person name="Simison M."/>
            <person name="Cherry J.M."/>
        </authorList>
    </citation>
    <scope>GENOME REANNOTATION</scope>
    <source>
        <strain>ATCC 204508 / S288c</strain>
    </source>
</reference>
<reference key="3">
    <citation type="journal article" date="1998" name="Genome Res.">
        <title>Transposable elements and genome organization: a comprehensive survey of retrotransposons revealed by the complete Saccharomyces cerevisiae genome sequence.</title>
        <authorList>
            <person name="Kim J.M."/>
            <person name="Vanguri S."/>
            <person name="Boeke J.D."/>
            <person name="Gabriel A."/>
            <person name="Voytas D.F."/>
        </authorList>
    </citation>
    <scope>NOMENCLATURE</scope>
</reference>
<reference key="4">
    <citation type="journal article" date="2005" name="Cytogenet. Genome Res.">
        <title>Happy together: the life and times of Ty retrotransposons and their hosts.</title>
        <authorList>
            <person name="Lesage P."/>
            <person name="Todeschini A.L."/>
        </authorList>
    </citation>
    <scope>REVIEW</scope>
</reference>
<comment type="function">
    <text evidence="1">Capsid protein (CA) is the structural component of the virus-like particle (VLP), forming the shell that encapsulates the retrotransposons dimeric RNA genome.</text>
</comment>
<comment type="function">
    <text evidence="1">The aspartyl protease (PR) mediates the proteolytic cleavages of the Gag and Gag-Pol polyproteins after assembly of the VLP.</text>
</comment>
<comment type="function">
    <text evidence="1">Reverse transcriptase/ribonuclease H (RT) is a multifunctional enzyme that catalyzes the conversion of the retro-elements RNA genome into dsDNA within the VLP. The enzyme displays a DNA polymerase activity that can copy either DNA or RNA templates, and a ribonuclease H (RNase H) activity that cleaves the RNA strand of RNA-DNA heteroduplexes during plus-strand synthesis and hydrolyzes RNA primers. The conversion leads to a linear dsDNA copy of the retrotransposon that includes long terminal repeats (LTRs) at both ends.</text>
</comment>
<comment type="function">
    <text evidence="1">Integrase (IN) targets the VLP to the nucleus, where a subparticle preintegration complex (PIC) containing at least integrase and the newly synthesized dsDNA copy of the retrotransposon must transit the nuclear membrane. Once in the nucleus, integrase performs the integration of the dsDNA into the host genome.</text>
</comment>
<comment type="catalytic activity">
    <reaction>
        <text>DNA(n) + a 2'-deoxyribonucleoside 5'-triphosphate = DNA(n+1) + diphosphate</text>
        <dbReference type="Rhea" id="RHEA:22508"/>
        <dbReference type="Rhea" id="RHEA-COMP:17339"/>
        <dbReference type="Rhea" id="RHEA-COMP:17340"/>
        <dbReference type="ChEBI" id="CHEBI:33019"/>
        <dbReference type="ChEBI" id="CHEBI:61560"/>
        <dbReference type="ChEBI" id="CHEBI:173112"/>
        <dbReference type="EC" id="2.7.7.49"/>
    </reaction>
</comment>
<comment type="catalytic activity">
    <reaction>
        <text>DNA(n) + a 2'-deoxyribonucleoside 5'-triphosphate = DNA(n+1) + diphosphate</text>
        <dbReference type="Rhea" id="RHEA:22508"/>
        <dbReference type="Rhea" id="RHEA-COMP:17339"/>
        <dbReference type="Rhea" id="RHEA-COMP:17340"/>
        <dbReference type="ChEBI" id="CHEBI:33019"/>
        <dbReference type="ChEBI" id="CHEBI:61560"/>
        <dbReference type="ChEBI" id="CHEBI:173112"/>
        <dbReference type="EC" id="2.7.7.7"/>
    </reaction>
</comment>
<comment type="catalytic activity">
    <reaction>
        <text>Endonucleolytic cleavage to 5'-phosphomonoester.</text>
        <dbReference type="EC" id="3.1.26.4"/>
    </reaction>
</comment>
<comment type="subunit">
    <text evidence="1">The protease is a homodimer, whose active site consists of two apposed aspartic acid residues.</text>
</comment>
<comment type="subcellular location">
    <subcellularLocation>
        <location>Cytoplasm</location>
    </subcellularLocation>
    <subcellularLocation>
        <location evidence="1">Nucleus</location>
    </subcellularLocation>
</comment>
<comment type="domain">
    <text evidence="1">Integrase core domain contains the D-x(n)-D-x(35)-E motif, named for the phylogenetically conserved glutamic acid and aspartic acid residues and the invariant 35 amino acid spacing between the second and third acidic residues. Each acidic residue of the D,D(35)E motif is independently essential for the 3'-processing and strand transfer activities of purified integrase protein.</text>
</comment>
<comment type="PTM">
    <text evidence="1">Proteolytically processed into capsid protein (CA), Ty4 protease (PR), integrase (IN) and reverse transcriptase/ribonuclease H (RT) proteins (By similarity). Initially, virus-like particles (VLPs) are composed of the structural unprocessed proteins Gag and Gag-Pol, and also contain the host initiator methionine tRNA (tRNA(i)-Met) which serves as a primer for minus-strand DNA synthesis, and a dimer of genomic Ty RNA. Processing of the polyproteins occurs within the particle and proceeds by an ordered pathway, called maturation. First, the protease (PR) is released by autocatalytic cleavage of the Gag-Pol polyprotein, and this cleavage is a prerequisite for subsequent processing at the remaining sites to release the mature structural and catalytic proteins. Maturation takes place prior to the RT reaction and is required to produce transposition-competent VLPs.</text>
</comment>
<comment type="miscellaneous">
    <text>Retrotransposons are mobile genetic entities that are able to replicate via an RNA intermediate and a reverse transcription step. In contrast to retroviruses, retrotransposons are non-infectious, lack an envelope and remain intracellular. Ty4 retrotransposons belong to the copia elements (pseudoviridae).</text>
</comment>
<comment type="caution">
    <text evidence="4">Could be the product of a pseudogene. Transposon Ty4-P (YPLCTy4-1) contains a frameshift at position 1105, which disrupts the ORF coding for protein TY4B. It is probably not functional.</text>
</comment>
<comment type="sequence caution" evidence="4">
    <conflict type="erroneous gene model prediction">
        <sequence resource="EMBL-CDS" id="DAA64692"/>
    </conflict>
</comment>
<feature type="chain" id="PRO_0000434006" description="Transposon Ty4-P Gag-Pol polyprotein">
    <location>
        <begin position="1"/>
        <end position="1104"/>
    </location>
</feature>
<feature type="domain" description="Integrase catalytic" evidence="3">
    <location>
        <begin position="619"/>
        <end position="786"/>
    </location>
</feature>
<feature type="region of interest" description="Ty4 protease">
    <location>
        <begin position="381"/>
        <end position="501"/>
    </location>
</feature>
<feature type="region of interest" description="Integrase-type zinc finger-like">
    <location>
        <begin position="539"/>
        <end position="599"/>
    </location>
</feature>
<feature type="coiled-coil region" evidence="2">
    <location>
        <begin position="48"/>
        <end position="112"/>
    </location>
</feature>
<feature type="active site" description="For protease activity; shared with dimeric partner" evidence="1">
    <location>
        <position position="414"/>
    </location>
</feature>
<feature type="binding site" evidence="3">
    <location>
        <position position="630"/>
    </location>
    <ligand>
        <name>Mg(2+)</name>
        <dbReference type="ChEBI" id="CHEBI:18420"/>
        <note>catalytic; for integrase activity</note>
    </ligand>
</feature>
<feature type="binding site" evidence="3">
    <location>
        <position position="695"/>
    </location>
    <ligand>
        <name>Mg(2+)</name>
        <dbReference type="ChEBI" id="CHEBI:18420"/>
        <note>catalytic; for integrase activity</note>
    </ligand>
</feature>
<proteinExistence type="uncertain"/>
<sequence length="1104" mass="127189">MATPVRDETRNVIDDNISARIQSKVKTNDTVRQTPSSLRKVSIKDEQVKQYQRNLNRFKTILNGLKAEEEKLSETDDIQMLAEKLLKLGETIDKVENRIVDLVEKIQLLETNENNNILHEHIDATGTYYLFDTLTSTNKRFYPKDCVFDYRTNNVENIPILLNNFKKFIKKYQFDDVFENDIIEIDPRENEILCKIIKEGLGESLDIMNTNTTDIFRIIDGLKNKYRSLHGRDVRIRAWEKVLVDTTCRNSALLMNKLQKLVLMEKWIFSKCCQDCPNLKDYLQEAIMGTLHESLRNSVKQRLYNIPHNVGINHEEFLINTVIETVIDLSPIADDQIENSCMYCKSVFHCSINCKKKPNRELRPDSTNFSKTYYLQGAQRQQQLKSSAKEQKSWNKTQKKSNKVYNSKKLVIIDTGSGVNITNDKTLLHNYEDSNRSTRFFGIGKNSSVSVKGYGYIKIKNGHNNTDNKCLLTYYVPEEESTIISCYDLAKKTKMVLSRKYTRLGNKIIKIKTKIVNGVIHVKMNELIERPSDDSKINAIKPTSSPGFKLNKRSITLEDAHKRMGHTGIQQIENSIKHNHYEESLDLIKEPNEFWCQTCKISKATKRNHYTGSMNNHSTDHEPGSSWCMDIFGPVSSSNADTKRYMLIMVDNNTRYCMTSTHFNKNAETILAQIRKNIQYVETQFDRKVREINSDRGTEFTNDQIEEYFISKGIHHILTSTQDHAANGRAERYIRTIVTDATTLLRQSNLRVKFWEYAVTSATNIRNCLEHKSTGKLPLKAISRQPVTVRLMSFLPFGEKGIIWNHNHKKLKPSGLPSIILCKDPNSYGYKFFIPSKNKIVTSDNYTIPNYTMDGRVRNTQNIYKSHQFSSHNDNEEDQIETVTNLCEALENYEDDNKPITRLEDLFTEEELSQIDSNAKYPSPSNNLEGDLDYVFSDVEESGDYDVESELSTTNTSISTDKNKILSNKDFNSELASTEISISEIDKKGLINTSHIDEDKYDEKVHRIPSIIQEKLVGSKNTIKINDENRISDRIRSKNIGSILNTGLSRCVDITDESITNKDESMHNAKPELIQEQFNKTNHETSFPKEGSIGTKCKIPKYRQ</sequence>
<accession>A0A0B7P3V8</accession>
<evidence type="ECO:0000250" key="1"/>
<evidence type="ECO:0000255" key="2"/>
<evidence type="ECO:0000255" key="3">
    <source>
        <dbReference type="PROSITE-ProRule" id="PRU00457"/>
    </source>
</evidence>
<evidence type="ECO:0000305" key="4"/>
<evidence type="ECO:0000312" key="5">
    <source>
        <dbReference type="SGD" id="S000007388"/>
    </source>
</evidence>
<keyword id="KW-0064">Aspartyl protease</keyword>
<keyword id="KW-0067">ATP-binding</keyword>
<keyword id="KW-0175">Coiled coil</keyword>
<keyword id="KW-0963">Cytoplasm</keyword>
<keyword id="KW-0229">DNA integration</keyword>
<keyword id="KW-0233">DNA recombination</keyword>
<keyword id="KW-0238">DNA-binding</keyword>
<keyword id="KW-0239">DNA-directed DNA polymerase</keyword>
<keyword id="KW-0255">Endonuclease</keyword>
<keyword id="KW-0378">Hydrolase</keyword>
<keyword id="KW-0460">Magnesium</keyword>
<keyword id="KW-0479">Metal-binding</keyword>
<keyword id="KW-0540">Nuclease</keyword>
<keyword id="KW-0547">Nucleotide-binding</keyword>
<keyword id="KW-0548">Nucleotidyltransferase</keyword>
<keyword id="KW-0539">Nucleus</keyword>
<keyword id="KW-0645">Protease</keyword>
<keyword id="KW-1185">Reference proteome</keyword>
<keyword id="KW-0694">RNA-binding</keyword>
<keyword id="KW-0695">RNA-directed DNA polymerase</keyword>
<keyword id="KW-0808">Transferase</keyword>
<keyword id="KW-0814">Transposable element</keyword>
<keyword id="KW-0815">Transposition</keyword>
<keyword id="KW-1188">Viral release from host cell</keyword>
<keyword id="KW-0917">Virion maturation</keyword>
<keyword id="KW-0862">Zinc</keyword>
<keyword id="KW-0863">Zinc-finger</keyword>
<organism>
    <name type="scientific">Saccharomyces cerevisiae (strain ATCC 204508 / S288c)</name>
    <name type="common">Baker's yeast</name>
    <dbReference type="NCBI Taxonomy" id="559292"/>
    <lineage>
        <taxon>Eukaryota</taxon>
        <taxon>Fungi</taxon>
        <taxon>Dikarya</taxon>
        <taxon>Ascomycota</taxon>
        <taxon>Saccharomycotina</taxon>
        <taxon>Saccharomycetes</taxon>
        <taxon>Saccharomycetales</taxon>
        <taxon>Saccharomycetaceae</taxon>
        <taxon>Saccharomyces</taxon>
    </lineage>
</organism>
<name>YP41B_YEAST</name>
<dbReference type="EC" id="3.4.23.-"/>
<dbReference type="EC" id="2.7.7.49"/>
<dbReference type="EC" id="2.7.7.7"/>
<dbReference type="EC" id="3.1.26.4"/>
<dbReference type="EMBL" id="BK006949">
    <property type="protein sequence ID" value="DAA64692.1"/>
    <property type="status" value="ALT_SEQ"/>
    <property type="molecule type" value="Genomic_DNA"/>
</dbReference>
<dbReference type="RefSeq" id="NP_001291944.1">
    <property type="nucleotide sequence ID" value="NM_001305015.2"/>
</dbReference>
<dbReference type="FunCoup" id="A0A0B7P3V8">
    <property type="interactions" value="21"/>
</dbReference>
<dbReference type="GlyGen" id="A0A0B7P3V8">
    <property type="glycosylation" value="1 site"/>
</dbReference>
<dbReference type="GeneID" id="856047"/>
<dbReference type="KEGG" id="sce:YPL060C-A"/>
<dbReference type="AGR" id="SGD:S000007388"/>
<dbReference type="SGD" id="S000007388">
    <property type="gene designation" value="YPL060C-A"/>
</dbReference>
<dbReference type="InParanoid" id="A0A0B7P3V8"/>
<dbReference type="OrthoDB" id="4068312at2759"/>
<dbReference type="BioGRID-ORCS" id="856047">
    <property type="hits" value="0 hits in 10 CRISPR screens"/>
</dbReference>
<dbReference type="Proteomes" id="UP000002311">
    <property type="component" value="Chromosome XVI"/>
</dbReference>
<dbReference type="RNAct" id="A0A0B7P3V8">
    <property type="molecule type" value="protein"/>
</dbReference>
<dbReference type="GO" id="GO:0005737">
    <property type="term" value="C:cytoplasm"/>
    <property type="evidence" value="ECO:0007669"/>
    <property type="project" value="UniProtKB-SubCell"/>
</dbReference>
<dbReference type="GO" id="GO:0005634">
    <property type="term" value="C:nucleus"/>
    <property type="evidence" value="ECO:0007669"/>
    <property type="project" value="UniProtKB-SubCell"/>
</dbReference>
<dbReference type="GO" id="GO:0004190">
    <property type="term" value="F:aspartic-type endopeptidase activity"/>
    <property type="evidence" value="ECO:0007669"/>
    <property type="project" value="UniProtKB-KW"/>
</dbReference>
<dbReference type="GO" id="GO:0005524">
    <property type="term" value="F:ATP binding"/>
    <property type="evidence" value="ECO:0007669"/>
    <property type="project" value="UniProtKB-KW"/>
</dbReference>
<dbReference type="GO" id="GO:0003677">
    <property type="term" value="F:DNA binding"/>
    <property type="evidence" value="ECO:0007669"/>
    <property type="project" value="UniProtKB-KW"/>
</dbReference>
<dbReference type="GO" id="GO:0003887">
    <property type="term" value="F:DNA-directed DNA polymerase activity"/>
    <property type="evidence" value="ECO:0007669"/>
    <property type="project" value="UniProtKB-KW"/>
</dbReference>
<dbReference type="GO" id="GO:0003723">
    <property type="term" value="F:RNA binding"/>
    <property type="evidence" value="ECO:0007669"/>
    <property type="project" value="UniProtKB-KW"/>
</dbReference>
<dbReference type="GO" id="GO:0003964">
    <property type="term" value="F:RNA-directed DNA polymerase activity"/>
    <property type="evidence" value="ECO:0007669"/>
    <property type="project" value="UniProtKB-KW"/>
</dbReference>
<dbReference type="GO" id="GO:0004523">
    <property type="term" value="F:RNA-DNA hybrid ribonuclease activity"/>
    <property type="evidence" value="ECO:0007669"/>
    <property type="project" value="UniProtKB-EC"/>
</dbReference>
<dbReference type="GO" id="GO:0008270">
    <property type="term" value="F:zinc ion binding"/>
    <property type="evidence" value="ECO:0007669"/>
    <property type="project" value="UniProtKB-KW"/>
</dbReference>
<dbReference type="GO" id="GO:0015074">
    <property type="term" value="P:DNA integration"/>
    <property type="evidence" value="ECO:0007669"/>
    <property type="project" value="UniProtKB-KW"/>
</dbReference>
<dbReference type="GO" id="GO:0006310">
    <property type="term" value="P:DNA recombination"/>
    <property type="evidence" value="ECO:0007669"/>
    <property type="project" value="UniProtKB-KW"/>
</dbReference>
<dbReference type="GO" id="GO:0006508">
    <property type="term" value="P:proteolysis"/>
    <property type="evidence" value="ECO:0007669"/>
    <property type="project" value="UniProtKB-KW"/>
</dbReference>
<dbReference type="GO" id="GO:0032196">
    <property type="term" value="P:transposition"/>
    <property type="evidence" value="ECO:0007669"/>
    <property type="project" value="UniProtKB-KW"/>
</dbReference>
<dbReference type="Gene3D" id="3.30.420.10">
    <property type="entry name" value="Ribonuclease H-like superfamily/Ribonuclease H"/>
    <property type="match status" value="1"/>
</dbReference>
<dbReference type="InterPro" id="IPR001584">
    <property type="entry name" value="Integrase_cat-core"/>
</dbReference>
<dbReference type="InterPro" id="IPR054722">
    <property type="entry name" value="PolX-like_BBD"/>
</dbReference>
<dbReference type="InterPro" id="IPR039537">
    <property type="entry name" value="Retrotran_Ty1/copia-like"/>
</dbReference>
<dbReference type="InterPro" id="IPR012337">
    <property type="entry name" value="RNaseH-like_sf"/>
</dbReference>
<dbReference type="InterPro" id="IPR036397">
    <property type="entry name" value="RNaseH_sf"/>
</dbReference>
<dbReference type="PANTHER" id="PTHR42648">
    <property type="entry name" value="TRANSPOSASE, PUTATIVE-RELATED"/>
    <property type="match status" value="1"/>
</dbReference>
<dbReference type="PANTHER" id="PTHR42648:SF11">
    <property type="entry name" value="TRANSPOSON TY4-P GAG-POL POLYPROTEIN"/>
    <property type="match status" value="1"/>
</dbReference>
<dbReference type="Pfam" id="PF22936">
    <property type="entry name" value="Pol_BBD"/>
    <property type="match status" value="1"/>
</dbReference>
<dbReference type="Pfam" id="PF00665">
    <property type="entry name" value="rve"/>
    <property type="match status" value="1"/>
</dbReference>
<dbReference type="SUPFAM" id="SSF53098">
    <property type="entry name" value="Ribonuclease H-like"/>
    <property type="match status" value="1"/>
</dbReference>
<dbReference type="PROSITE" id="PS50994">
    <property type="entry name" value="INTEGRASE"/>
    <property type="match status" value="1"/>
</dbReference>
<gene>
    <name type="primary">TY4B-P</name>
    <name type="synonym">YPLCTy4-1 POL</name>
    <name evidence="5" type="ordered locus">YPL060C-A</name>
</gene>
<protein>
    <recommendedName>
        <fullName>Transposon Ty4-P Gag-Pol polyprotein</fullName>
    </recommendedName>
    <alternativeName>
        <fullName>TY4A-TY4B</fullName>
    </alternativeName>
    <alternativeName>
        <fullName>Transposon Ty4 TYA-TYB polyprotein</fullName>
    </alternativeName>
    <domain>
        <recommendedName>
            <fullName>Capsid protein</fullName>
            <shortName>CA</shortName>
        </recommendedName>
    </domain>
    <domain>
        <recommendedName>
            <fullName>Ty4 protease</fullName>
            <shortName>PR</shortName>
            <ecNumber>3.4.23.-</ecNumber>
        </recommendedName>
    </domain>
    <domain>
        <recommendedName>
            <fullName>Integrase</fullName>
            <shortName>IN</shortName>
        </recommendedName>
    </domain>
    <domain>
        <recommendedName>
            <fullName>Reverse transcriptase/ribonuclease H</fullName>
            <shortName>RT</shortName>
            <shortName>RT-RH</shortName>
            <ecNumber>2.7.7.49</ecNumber>
            <ecNumber>2.7.7.7</ecNumber>
            <ecNumber>3.1.26.4</ecNumber>
        </recommendedName>
    </domain>
</protein>